<feature type="chain" id="PRO_0000293744" description="Small ribosomal subunit protein uS3">
    <location>
        <begin position="1"/>
        <end position="237"/>
    </location>
</feature>
<feature type="domain" description="KH type-2" evidence="1">
    <location>
        <begin position="39"/>
        <end position="107"/>
    </location>
</feature>
<comment type="function">
    <text evidence="1">Binds the lower part of the 30S subunit head. Binds mRNA in the 70S ribosome, positioning it for translation.</text>
</comment>
<comment type="subunit">
    <text evidence="1">Part of the 30S ribosomal subunit. Forms a tight complex with proteins S10 and S14.</text>
</comment>
<comment type="similarity">
    <text evidence="1">Belongs to the universal ribosomal protein uS3 family.</text>
</comment>
<dbReference type="EMBL" id="CP000462">
    <property type="protein sequence ID" value="ABK38458.1"/>
    <property type="molecule type" value="Genomic_DNA"/>
</dbReference>
<dbReference type="RefSeq" id="WP_005331168.1">
    <property type="nucleotide sequence ID" value="NC_008570.1"/>
</dbReference>
<dbReference type="RefSeq" id="YP_854847.1">
    <property type="nucleotide sequence ID" value="NC_008570.1"/>
</dbReference>
<dbReference type="SMR" id="A0KF27"/>
<dbReference type="STRING" id="380703.AHA_0315"/>
<dbReference type="EnsemblBacteria" id="ABK38458">
    <property type="protein sequence ID" value="ABK38458"/>
    <property type="gene ID" value="AHA_0315"/>
</dbReference>
<dbReference type="GeneID" id="97858400"/>
<dbReference type="KEGG" id="aha:AHA_0315"/>
<dbReference type="PATRIC" id="fig|380703.7.peg.304"/>
<dbReference type="eggNOG" id="COG0092">
    <property type="taxonomic scope" value="Bacteria"/>
</dbReference>
<dbReference type="HOGENOM" id="CLU_058591_0_2_6"/>
<dbReference type="OrthoDB" id="9806396at2"/>
<dbReference type="Proteomes" id="UP000000756">
    <property type="component" value="Chromosome"/>
</dbReference>
<dbReference type="GO" id="GO:0022627">
    <property type="term" value="C:cytosolic small ribosomal subunit"/>
    <property type="evidence" value="ECO:0007669"/>
    <property type="project" value="TreeGrafter"/>
</dbReference>
<dbReference type="GO" id="GO:0003729">
    <property type="term" value="F:mRNA binding"/>
    <property type="evidence" value="ECO:0007669"/>
    <property type="project" value="UniProtKB-UniRule"/>
</dbReference>
<dbReference type="GO" id="GO:0019843">
    <property type="term" value="F:rRNA binding"/>
    <property type="evidence" value="ECO:0007669"/>
    <property type="project" value="UniProtKB-UniRule"/>
</dbReference>
<dbReference type="GO" id="GO:0003735">
    <property type="term" value="F:structural constituent of ribosome"/>
    <property type="evidence" value="ECO:0007669"/>
    <property type="project" value="InterPro"/>
</dbReference>
<dbReference type="GO" id="GO:0006412">
    <property type="term" value="P:translation"/>
    <property type="evidence" value="ECO:0007669"/>
    <property type="project" value="UniProtKB-UniRule"/>
</dbReference>
<dbReference type="CDD" id="cd02412">
    <property type="entry name" value="KH-II_30S_S3"/>
    <property type="match status" value="1"/>
</dbReference>
<dbReference type="FunFam" id="3.30.1140.32:FF:000001">
    <property type="entry name" value="30S ribosomal protein S3"/>
    <property type="match status" value="1"/>
</dbReference>
<dbReference type="FunFam" id="3.30.300.20:FF:000001">
    <property type="entry name" value="30S ribosomal protein S3"/>
    <property type="match status" value="1"/>
</dbReference>
<dbReference type="Gene3D" id="3.30.300.20">
    <property type="match status" value="1"/>
</dbReference>
<dbReference type="Gene3D" id="3.30.1140.32">
    <property type="entry name" value="Ribosomal protein S3, C-terminal domain"/>
    <property type="match status" value="1"/>
</dbReference>
<dbReference type="HAMAP" id="MF_01309_B">
    <property type="entry name" value="Ribosomal_uS3_B"/>
    <property type="match status" value="1"/>
</dbReference>
<dbReference type="InterPro" id="IPR004087">
    <property type="entry name" value="KH_dom"/>
</dbReference>
<dbReference type="InterPro" id="IPR015946">
    <property type="entry name" value="KH_dom-like_a/b"/>
</dbReference>
<dbReference type="InterPro" id="IPR004044">
    <property type="entry name" value="KH_dom_type_2"/>
</dbReference>
<dbReference type="InterPro" id="IPR009019">
    <property type="entry name" value="KH_sf_prok-type"/>
</dbReference>
<dbReference type="InterPro" id="IPR036419">
    <property type="entry name" value="Ribosomal_S3_C_sf"/>
</dbReference>
<dbReference type="InterPro" id="IPR005704">
    <property type="entry name" value="Ribosomal_uS3_bac-typ"/>
</dbReference>
<dbReference type="InterPro" id="IPR001351">
    <property type="entry name" value="Ribosomal_uS3_C"/>
</dbReference>
<dbReference type="InterPro" id="IPR018280">
    <property type="entry name" value="Ribosomal_uS3_CS"/>
</dbReference>
<dbReference type="NCBIfam" id="TIGR01009">
    <property type="entry name" value="rpsC_bact"/>
    <property type="match status" value="1"/>
</dbReference>
<dbReference type="PANTHER" id="PTHR11760">
    <property type="entry name" value="30S/40S RIBOSOMAL PROTEIN S3"/>
    <property type="match status" value="1"/>
</dbReference>
<dbReference type="PANTHER" id="PTHR11760:SF19">
    <property type="entry name" value="SMALL RIBOSOMAL SUBUNIT PROTEIN US3C"/>
    <property type="match status" value="1"/>
</dbReference>
<dbReference type="Pfam" id="PF07650">
    <property type="entry name" value="KH_2"/>
    <property type="match status" value="1"/>
</dbReference>
<dbReference type="Pfam" id="PF00189">
    <property type="entry name" value="Ribosomal_S3_C"/>
    <property type="match status" value="1"/>
</dbReference>
<dbReference type="SMART" id="SM00322">
    <property type="entry name" value="KH"/>
    <property type="match status" value="1"/>
</dbReference>
<dbReference type="SUPFAM" id="SSF54814">
    <property type="entry name" value="Prokaryotic type KH domain (KH-domain type II)"/>
    <property type="match status" value="1"/>
</dbReference>
<dbReference type="SUPFAM" id="SSF54821">
    <property type="entry name" value="Ribosomal protein S3 C-terminal domain"/>
    <property type="match status" value="1"/>
</dbReference>
<dbReference type="PROSITE" id="PS50823">
    <property type="entry name" value="KH_TYPE_2"/>
    <property type="match status" value="1"/>
</dbReference>
<dbReference type="PROSITE" id="PS00548">
    <property type="entry name" value="RIBOSOMAL_S3"/>
    <property type="match status" value="1"/>
</dbReference>
<accession>A0KF27</accession>
<sequence>MGQKVHPNGIRLGITKPWNSTWFANTKDFADNLYSDFQVRQFLTKELKNASLSKITIERPAKSIRVTIHTARPGVVIGKKGEDVEKLRKAVAAIAGVPAQINISEVRKPELDGKLVADSITSQLERRVMFRRAMKRAVQNAMRLGAKGIKVEVSGRLGGAEIARTEWYREGRVPLHTLRADIDYATSEAHTTYGVIGVKVWIFKGEVLGGLAAVNAAAAQEQAPAKPKRDNKRRAAK</sequence>
<organism>
    <name type="scientific">Aeromonas hydrophila subsp. hydrophila (strain ATCC 7966 / DSM 30187 / BCRC 13018 / CCUG 14551 / JCM 1027 / KCTC 2358 / NCIMB 9240 / NCTC 8049)</name>
    <dbReference type="NCBI Taxonomy" id="380703"/>
    <lineage>
        <taxon>Bacteria</taxon>
        <taxon>Pseudomonadati</taxon>
        <taxon>Pseudomonadota</taxon>
        <taxon>Gammaproteobacteria</taxon>
        <taxon>Aeromonadales</taxon>
        <taxon>Aeromonadaceae</taxon>
        <taxon>Aeromonas</taxon>
    </lineage>
</organism>
<proteinExistence type="inferred from homology"/>
<keyword id="KW-1185">Reference proteome</keyword>
<keyword id="KW-0687">Ribonucleoprotein</keyword>
<keyword id="KW-0689">Ribosomal protein</keyword>
<keyword id="KW-0694">RNA-binding</keyword>
<keyword id="KW-0699">rRNA-binding</keyword>
<evidence type="ECO:0000255" key="1">
    <source>
        <dbReference type="HAMAP-Rule" id="MF_01309"/>
    </source>
</evidence>
<evidence type="ECO:0000305" key="2"/>
<protein>
    <recommendedName>
        <fullName evidence="1">Small ribosomal subunit protein uS3</fullName>
    </recommendedName>
    <alternativeName>
        <fullName evidence="2">30S ribosomal protein S3</fullName>
    </alternativeName>
</protein>
<name>RS3_AERHH</name>
<gene>
    <name evidence="1" type="primary">rpsC</name>
    <name type="ordered locus">AHA_0315</name>
</gene>
<reference key="1">
    <citation type="journal article" date="2006" name="J. Bacteriol.">
        <title>Genome sequence of Aeromonas hydrophila ATCC 7966T: jack of all trades.</title>
        <authorList>
            <person name="Seshadri R."/>
            <person name="Joseph S.W."/>
            <person name="Chopra A.K."/>
            <person name="Sha J."/>
            <person name="Shaw J."/>
            <person name="Graf J."/>
            <person name="Haft D.H."/>
            <person name="Wu M."/>
            <person name="Ren Q."/>
            <person name="Rosovitz M.J."/>
            <person name="Madupu R."/>
            <person name="Tallon L."/>
            <person name="Kim M."/>
            <person name="Jin S."/>
            <person name="Vuong H."/>
            <person name="Stine O.C."/>
            <person name="Ali A."/>
            <person name="Horneman A.J."/>
            <person name="Heidelberg J.F."/>
        </authorList>
    </citation>
    <scope>NUCLEOTIDE SEQUENCE [LARGE SCALE GENOMIC DNA]</scope>
    <source>
        <strain>ATCC 7966 / DSM 30187 / BCRC 13018 / CCUG 14551 / JCM 1027 / KCTC 2358 / NCIMB 9240 / NCTC 8049</strain>
    </source>
</reference>